<dbReference type="EC" id="6.1.1.20" evidence="1"/>
<dbReference type="EMBL" id="AP006840">
    <property type="protein sequence ID" value="BAD40090.1"/>
    <property type="molecule type" value="Genomic_DNA"/>
</dbReference>
<dbReference type="RefSeq" id="WP_011195237.1">
    <property type="nucleotide sequence ID" value="NC_006177.1"/>
</dbReference>
<dbReference type="SMR" id="Q67QF3"/>
<dbReference type="STRING" id="292459.STH1105"/>
<dbReference type="KEGG" id="sth:STH1105"/>
<dbReference type="eggNOG" id="COG0016">
    <property type="taxonomic scope" value="Bacteria"/>
</dbReference>
<dbReference type="HOGENOM" id="CLU_025086_0_1_9"/>
<dbReference type="OrthoDB" id="9800719at2"/>
<dbReference type="Proteomes" id="UP000000417">
    <property type="component" value="Chromosome"/>
</dbReference>
<dbReference type="GO" id="GO:0005737">
    <property type="term" value="C:cytoplasm"/>
    <property type="evidence" value="ECO:0007669"/>
    <property type="project" value="UniProtKB-SubCell"/>
</dbReference>
<dbReference type="GO" id="GO:0005524">
    <property type="term" value="F:ATP binding"/>
    <property type="evidence" value="ECO:0007669"/>
    <property type="project" value="UniProtKB-UniRule"/>
</dbReference>
<dbReference type="GO" id="GO:0140096">
    <property type="term" value="F:catalytic activity, acting on a protein"/>
    <property type="evidence" value="ECO:0007669"/>
    <property type="project" value="UniProtKB-ARBA"/>
</dbReference>
<dbReference type="GO" id="GO:0000287">
    <property type="term" value="F:magnesium ion binding"/>
    <property type="evidence" value="ECO:0007669"/>
    <property type="project" value="UniProtKB-UniRule"/>
</dbReference>
<dbReference type="GO" id="GO:0004826">
    <property type="term" value="F:phenylalanine-tRNA ligase activity"/>
    <property type="evidence" value="ECO:0007669"/>
    <property type="project" value="UniProtKB-UniRule"/>
</dbReference>
<dbReference type="GO" id="GO:0016740">
    <property type="term" value="F:transferase activity"/>
    <property type="evidence" value="ECO:0007669"/>
    <property type="project" value="UniProtKB-ARBA"/>
</dbReference>
<dbReference type="GO" id="GO:0000049">
    <property type="term" value="F:tRNA binding"/>
    <property type="evidence" value="ECO:0007669"/>
    <property type="project" value="InterPro"/>
</dbReference>
<dbReference type="GO" id="GO:0006432">
    <property type="term" value="P:phenylalanyl-tRNA aminoacylation"/>
    <property type="evidence" value="ECO:0007669"/>
    <property type="project" value="UniProtKB-UniRule"/>
</dbReference>
<dbReference type="CDD" id="cd00496">
    <property type="entry name" value="PheRS_alpha_core"/>
    <property type="match status" value="1"/>
</dbReference>
<dbReference type="FunFam" id="3.30.930.10:FF:000003">
    <property type="entry name" value="Phenylalanine--tRNA ligase alpha subunit"/>
    <property type="match status" value="1"/>
</dbReference>
<dbReference type="Gene3D" id="3.30.930.10">
    <property type="entry name" value="Bira Bifunctional Protein, Domain 2"/>
    <property type="match status" value="1"/>
</dbReference>
<dbReference type="HAMAP" id="MF_00281">
    <property type="entry name" value="Phe_tRNA_synth_alpha1"/>
    <property type="match status" value="1"/>
</dbReference>
<dbReference type="InterPro" id="IPR006195">
    <property type="entry name" value="aa-tRNA-synth_II"/>
</dbReference>
<dbReference type="InterPro" id="IPR045864">
    <property type="entry name" value="aa-tRNA-synth_II/BPL/LPL"/>
</dbReference>
<dbReference type="InterPro" id="IPR004529">
    <property type="entry name" value="Phe-tRNA-synth_IIc_asu"/>
</dbReference>
<dbReference type="InterPro" id="IPR004188">
    <property type="entry name" value="Phe-tRNA_ligase_II_N"/>
</dbReference>
<dbReference type="InterPro" id="IPR022911">
    <property type="entry name" value="Phe_tRNA_ligase_alpha1_bac"/>
</dbReference>
<dbReference type="InterPro" id="IPR002319">
    <property type="entry name" value="Phenylalanyl-tRNA_Synthase"/>
</dbReference>
<dbReference type="InterPro" id="IPR010978">
    <property type="entry name" value="tRNA-bd_arm"/>
</dbReference>
<dbReference type="NCBIfam" id="TIGR00468">
    <property type="entry name" value="pheS"/>
    <property type="match status" value="1"/>
</dbReference>
<dbReference type="PANTHER" id="PTHR11538:SF41">
    <property type="entry name" value="PHENYLALANINE--TRNA LIGASE, MITOCHONDRIAL"/>
    <property type="match status" value="1"/>
</dbReference>
<dbReference type="PANTHER" id="PTHR11538">
    <property type="entry name" value="PHENYLALANYL-TRNA SYNTHETASE"/>
    <property type="match status" value="1"/>
</dbReference>
<dbReference type="Pfam" id="PF02912">
    <property type="entry name" value="Phe_tRNA-synt_N"/>
    <property type="match status" value="1"/>
</dbReference>
<dbReference type="Pfam" id="PF01409">
    <property type="entry name" value="tRNA-synt_2d"/>
    <property type="match status" value="1"/>
</dbReference>
<dbReference type="SUPFAM" id="SSF55681">
    <property type="entry name" value="Class II aaRS and biotin synthetases"/>
    <property type="match status" value="1"/>
</dbReference>
<dbReference type="SUPFAM" id="SSF46589">
    <property type="entry name" value="tRNA-binding arm"/>
    <property type="match status" value="1"/>
</dbReference>
<dbReference type="PROSITE" id="PS50862">
    <property type="entry name" value="AA_TRNA_LIGASE_II"/>
    <property type="match status" value="1"/>
</dbReference>
<sequence>MKDQLLKLRDEALAAIAAAADVGAIQEMRVRYLGKKSELSQVLGGLGRLPTVEERKAMGALGNEIKQAITAALDAREAELAAAALQARLASERIDVTLPGAPVRRGHLHILNQVIHRIEEIFIAMGYEVAESRQVETDWYNFEALNIPKGHPARDAQDSLFLSEEVLLRTHTSNTQIRYMLEVARGRTPVKIICPGRVFRRDFEDATHAMMFHQVEGLVIDKGITMASLKGALTEMARALFGPDVGIRLRPSYFPFTEPSAEMDISCIFCGGKGCRTCKGSGWIEIGGSGMVHPNVLRAGGYDPEEVSGWAFGYGPERVAMLMYGIEDIRHFVNNDMRFLRQF</sequence>
<gene>
    <name evidence="1" type="primary">pheS</name>
    <name type="synonym">pheSA</name>
    <name type="ordered locus">STH1105</name>
</gene>
<evidence type="ECO:0000255" key="1">
    <source>
        <dbReference type="HAMAP-Rule" id="MF_00281"/>
    </source>
</evidence>
<name>SYFA_SYMTH</name>
<comment type="catalytic activity">
    <reaction evidence="1">
        <text>tRNA(Phe) + L-phenylalanine + ATP = L-phenylalanyl-tRNA(Phe) + AMP + diphosphate + H(+)</text>
        <dbReference type="Rhea" id="RHEA:19413"/>
        <dbReference type="Rhea" id="RHEA-COMP:9668"/>
        <dbReference type="Rhea" id="RHEA-COMP:9699"/>
        <dbReference type="ChEBI" id="CHEBI:15378"/>
        <dbReference type="ChEBI" id="CHEBI:30616"/>
        <dbReference type="ChEBI" id="CHEBI:33019"/>
        <dbReference type="ChEBI" id="CHEBI:58095"/>
        <dbReference type="ChEBI" id="CHEBI:78442"/>
        <dbReference type="ChEBI" id="CHEBI:78531"/>
        <dbReference type="ChEBI" id="CHEBI:456215"/>
        <dbReference type="EC" id="6.1.1.20"/>
    </reaction>
</comment>
<comment type="cofactor">
    <cofactor evidence="1">
        <name>Mg(2+)</name>
        <dbReference type="ChEBI" id="CHEBI:18420"/>
    </cofactor>
    <text evidence="1">Binds 2 magnesium ions per tetramer.</text>
</comment>
<comment type="subunit">
    <text evidence="1">Tetramer of two alpha and two beta subunits.</text>
</comment>
<comment type="subcellular location">
    <subcellularLocation>
        <location evidence="1">Cytoplasm</location>
    </subcellularLocation>
</comment>
<comment type="similarity">
    <text evidence="1">Belongs to the class-II aminoacyl-tRNA synthetase family. Phe-tRNA synthetase alpha subunit type 1 subfamily.</text>
</comment>
<accession>Q67QF3</accession>
<organism>
    <name type="scientific">Symbiobacterium thermophilum (strain DSM 24528 / JCM 14929 / IAM 14863 / T)</name>
    <dbReference type="NCBI Taxonomy" id="292459"/>
    <lineage>
        <taxon>Bacteria</taxon>
        <taxon>Bacillati</taxon>
        <taxon>Bacillota</taxon>
        <taxon>Clostridia</taxon>
        <taxon>Eubacteriales</taxon>
        <taxon>Symbiobacteriaceae</taxon>
        <taxon>Symbiobacterium</taxon>
    </lineage>
</organism>
<keyword id="KW-0030">Aminoacyl-tRNA synthetase</keyword>
<keyword id="KW-0067">ATP-binding</keyword>
<keyword id="KW-0963">Cytoplasm</keyword>
<keyword id="KW-0436">Ligase</keyword>
<keyword id="KW-0460">Magnesium</keyword>
<keyword id="KW-0479">Metal-binding</keyword>
<keyword id="KW-0547">Nucleotide-binding</keyword>
<keyword id="KW-0648">Protein biosynthesis</keyword>
<keyword id="KW-1185">Reference proteome</keyword>
<proteinExistence type="inferred from homology"/>
<protein>
    <recommendedName>
        <fullName evidence="1">Phenylalanine--tRNA ligase alpha subunit</fullName>
        <ecNumber evidence="1">6.1.1.20</ecNumber>
    </recommendedName>
    <alternativeName>
        <fullName evidence="1">Phenylalanyl-tRNA synthetase alpha subunit</fullName>
        <shortName evidence="1">PheRS</shortName>
    </alternativeName>
</protein>
<feature type="chain" id="PRO_0000126779" description="Phenylalanine--tRNA ligase alpha subunit">
    <location>
        <begin position="1"/>
        <end position="343"/>
    </location>
</feature>
<feature type="binding site" evidence="1">
    <location>
        <position position="258"/>
    </location>
    <ligand>
        <name>Mg(2+)</name>
        <dbReference type="ChEBI" id="CHEBI:18420"/>
        <note>shared with beta subunit</note>
    </ligand>
</feature>
<reference key="1">
    <citation type="journal article" date="2004" name="Nucleic Acids Res.">
        <title>Genome sequence of Symbiobacterium thermophilum, an uncultivable bacterium that depends on microbial commensalism.</title>
        <authorList>
            <person name="Ueda K."/>
            <person name="Yamashita A."/>
            <person name="Ishikawa J."/>
            <person name="Shimada M."/>
            <person name="Watsuji T."/>
            <person name="Morimura K."/>
            <person name="Ikeda H."/>
            <person name="Hattori M."/>
            <person name="Beppu T."/>
        </authorList>
    </citation>
    <scope>NUCLEOTIDE SEQUENCE [LARGE SCALE GENOMIC DNA]</scope>
    <source>
        <strain>DSM 24528 / JCM 14929 / IAM 14863 / T</strain>
    </source>
</reference>